<organism>
    <name type="scientific">Escherichia coli (strain UTI89 / UPEC)</name>
    <dbReference type="NCBI Taxonomy" id="364106"/>
    <lineage>
        <taxon>Bacteria</taxon>
        <taxon>Pseudomonadati</taxon>
        <taxon>Pseudomonadota</taxon>
        <taxon>Gammaproteobacteria</taxon>
        <taxon>Enterobacterales</taxon>
        <taxon>Enterobacteriaceae</taxon>
        <taxon>Escherichia</taxon>
    </lineage>
</organism>
<accession>Q1R9C0</accession>
<protein>
    <recommendedName>
        <fullName evidence="1">UPF0208 membrane protein YfbV</fullName>
    </recommendedName>
</protein>
<sequence length="151" mass="17146">MSTPDNRSVNFFSLFRRGQHYSKTWPLEKRLAPVFVENRVIKMTCYAIRFMPPIAVFTLCWQIALGGQLGPAVATALFALSLPMQGLWWLGKRSVTPLPPAILNWFYDVRGKLQESGQVLAPVEGKPDYQALADTLKRAFKQLDKTFLDDL</sequence>
<evidence type="ECO:0000255" key="1">
    <source>
        <dbReference type="HAMAP-Rule" id="MF_01101"/>
    </source>
</evidence>
<keyword id="KW-0997">Cell inner membrane</keyword>
<keyword id="KW-1003">Cell membrane</keyword>
<keyword id="KW-0472">Membrane</keyword>
<keyword id="KW-0812">Transmembrane</keyword>
<keyword id="KW-1133">Transmembrane helix</keyword>
<dbReference type="EMBL" id="CP000243">
    <property type="protein sequence ID" value="ABE08044.1"/>
    <property type="molecule type" value="Genomic_DNA"/>
</dbReference>
<dbReference type="RefSeq" id="WP_000106620.1">
    <property type="nucleotide sequence ID" value="NZ_CP064825.1"/>
</dbReference>
<dbReference type="KEGG" id="eci:UTI89_C2577"/>
<dbReference type="HOGENOM" id="CLU_128746_0_0_6"/>
<dbReference type="Proteomes" id="UP000001952">
    <property type="component" value="Chromosome"/>
</dbReference>
<dbReference type="GO" id="GO:0005886">
    <property type="term" value="C:plasma membrane"/>
    <property type="evidence" value="ECO:0007669"/>
    <property type="project" value="UniProtKB-SubCell"/>
</dbReference>
<dbReference type="HAMAP" id="MF_01101">
    <property type="entry name" value="UPF0208"/>
    <property type="match status" value="1"/>
</dbReference>
<dbReference type="InterPro" id="IPR007334">
    <property type="entry name" value="UPF0208"/>
</dbReference>
<dbReference type="NCBIfam" id="NF002493">
    <property type="entry name" value="PRK01816.1"/>
    <property type="match status" value="1"/>
</dbReference>
<dbReference type="Pfam" id="PF04217">
    <property type="entry name" value="DUF412"/>
    <property type="match status" value="1"/>
</dbReference>
<proteinExistence type="inferred from homology"/>
<gene>
    <name evidence="1" type="primary">yfbV</name>
    <name type="ordered locus">UTI89_C2577</name>
</gene>
<reference key="1">
    <citation type="journal article" date="2006" name="Proc. Natl. Acad. Sci. U.S.A.">
        <title>Identification of genes subject to positive selection in uropathogenic strains of Escherichia coli: a comparative genomics approach.</title>
        <authorList>
            <person name="Chen S.L."/>
            <person name="Hung C.-S."/>
            <person name="Xu J."/>
            <person name="Reigstad C.S."/>
            <person name="Magrini V."/>
            <person name="Sabo A."/>
            <person name="Blasiar D."/>
            <person name="Bieri T."/>
            <person name="Meyer R.R."/>
            <person name="Ozersky P."/>
            <person name="Armstrong J.R."/>
            <person name="Fulton R.S."/>
            <person name="Latreille J.P."/>
            <person name="Spieth J."/>
            <person name="Hooton T.M."/>
            <person name="Mardis E.R."/>
            <person name="Hultgren S.J."/>
            <person name="Gordon J.I."/>
        </authorList>
    </citation>
    <scope>NUCLEOTIDE SEQUENCE [LARGE SCALE GENOMIC DNA]</scope>
    <source>
        <strain>UTI89 / UPEC</strain>
    </source>
</reference>
<comment type="subcellular location">
    <subcellularLocation>
        <location evidence="1">Cell inner membrane</location>
        <topology evidence="1">Multi-pass membrane protein</topology>
    </subcellularLocation>
</comment>
<comment type="similarity">
    <text evidence="1">Belongs to the UPF0208 family.</text>
</comment>
<feature type="chain" id="PRO_1000064971" description="UPF0208 membrane protein YfbV">
    <location>
        <begin position="1"/>
        <end position="151"/>
    </location>
</feature>
<feature type="transmembrane region" description="Helical" evidence="1">
    <location>
        <begin position="46"/>
        <end position="65"/>
    </location>
</feature>
<feature type="transmembrane region" description="Helical" evidence="1">
    <location>
        <begin position="69"/>
        <end position="91"/>
    </location>
</feature>
<name>YFBV_ECOUT</name>